<feature type="chain" id="PRO_0000373964" description="WD repeat-containing protein 55 homolog">
    <location>
        <begin position="1"/>
        <end position="503"/>
    </location>
</feature>
<feature type="repeat" description="WD 1">
    <location>
        <begin position="157"/>
        <end position="196"/>
    </location>
</feature>
<feature type="repeat" description="WD 2">
    <location>
        <begin position="201"/>
        <end position="242"/>
    </location>
</feature>
<feature type="repeat" description="WD 3">
    <location>
        <begin position="244"/>
        <end position="282"/>
    </location>
</feature>
<feature type="repeat" description="WD 4">
    <location>
        <begin position="285"/>
        <end position="324"/>
    </location>
</feature>
<feature type="repeat" description="WD 5">
    <location>
        <begin position="327"/>
        <end position="366"/>
    </location>
</feature>
<feature type="repeat" description="WD 6">
    <location>
        <begin position="411"/>
        <end position="450"/>
    </location>
</feature>
<feature type="region of interest" description="Disordered" evidence="1">
    <location>
        <begin position="1"/>
        <end position="131"/>
    </location>
</feature>
<feature type="region of interest" description="Disordered" evidence="1">
    <location>
        <begin position="483"/>
        <end position="503"/>
    </location>
</feature>
<feature type="compositionally biased region" description="Acidic residues" evidence="1">
    <location>
        <begin position="12"/>
        <end position="23"/>
    </location>
</feature>
<feature type="compositionally biased region" description="Acidic residues" evidence="1">
    <location>
        <begin position="37"/>
        <end position="56"/>
    </location>
</feature>
<feature type="compositionally biased region" description="Polar residues" evidence="1">
    <location>
        <begin position="59"/>
        <end position="76"/>
    </location>
</feature>
<feature type="compositionally biased region" description="Acidic residues" evidence="1">
    <location>
        <begin position="78"/>
        <end position="96"/>
    </location>
</feature>
<reference key="1">
    <citation type="journal article" date="2005" name="Genome Res.">
        <title>Comparative genome sequencing of Drosophila pseudoobscura: chromosomal, gene, and cis-element evolution.</title>
        <authorList>
            <person name="Richards S."/>
            <person name="Liu Y."/>
            <person name="Bettencourt B.R."/>
            <person name="Hradecky P."/>
            <person name="Letovsky S."/>
            <person name="Nielsen R."/>
            <person name="Thornton K."/>
            <person name="Hubisz M.J."/>
            <person name="Chen R."/>
            <person name="Meisel R.P."/>
            <person name="Couronne O."/>
            <person name="Hua S."/>
            <person name="Smith M.A."/>
            <person name="Zhang P."/>
            <person name="Liu J."/>
            <person name="Bussemaker H.J."/>
            <person name="van Batenburg M.F."/>
            <person name="Howells S.L."/>
            <person name="Scherer S.E."/>
            <person name="Sodergren E."/>
            <person name="Matthews B.B."/>
            <person name="Crosby M.A."/>
            <person name="Schroeder A.J."/>
            <person name="Ortiz-Barrientos D."/>
            <person name="Rives C.M."/>
            <person name="Metzker M.L."/>
            <person name="Muzny D.M."/>
            <person name="Scott G."/>
            <person name="Steffen D."/>
            <person name="Wheeler D.A."/>
            <person name="Worley K.C."/>
            <person name="Havlak P."/>
            <person name="Durbin K.J."/>
            <person name="Egan A."/>
            <person name="Gill R."/>
            <person name="Hume J."/>
            <person name="Morgan M.B."/>
            <person name="Miner G."/>
            <person name="Hamilton C."/>
            <person name="Huang Y."/>
            <person name="Waldron L."/>
            <person name="Verduzco D."/>
            <person name="Clerc-Blankenburg K.P."/>
            <person name="Dubchak I."/>
            <person name="Noor M.A.F."/>
            <person name="Anderson W."/>
            <person name="White K.P."/>
            <person name="Clark A.G."/>
            <person name="Schaeffer S.W."/>
            <person name="Gelbart W.M."/>
            <person name="Weinstock G.M."/>
            <person name="Gibbs R.A."/>
        </authorList>
    </citation>
    <scope>NUCLEOTIDE SEQUENCE [LARGE SCALE GENOMIC DNA]</scope>
    <source>
        <strain>MV2-25 / Tucson 14011-0121.94</strain>
    </source>
</reference>
<organism>
    <name type="scientific">Drosophila pseudoobscura pseudoobscura</name>
    <name type="common">Fruit fly</name>
    <dbReference type="NCBI Taxonomy" id="46245"/>
    <lineage>
        <taxon>Eukaryota</taxon>
        <taxon>Metazoa</taxon>
        <taxon>Ecdysozoa</taxon>
        <taxon>Arthropoda</taxon>
        <taxon>Hexapoda</taxon>
        <taxon>Insecta</taxon>
        <taxon>Pterygota</taxon>
        <taxon>Neoptera</taxon>
        <taxon>Endopterygota</taxon>
        <taxon>Diptera</taxon>
        <taxon>Brachycera</taxon>
        <taxon>Muscomorpha</taxon>
        <taxon>Ephydroidea</taxon>
        <taxon>Drosophilidae</taxon>
        <taxon>Drosophila</taxon>
        <taxon>Sophophora</taxon>
    </lineage>
</organism>
<proteinExistence type="inferred from homology"/>
<comment type="similarity">
    <text evidence="2">Belongs to the WD repeat WDR55 family.</text>
</comment>
<accession>Q294Y7</accession>
<keyword id="KW-1185">Reference proteome</keyword>
<keyword id="KW-0677">Repeat</keyword>
<keyword id="KW-0853">WD repeat</keyword>
<gene>
    <name type="ORF">GA13204</name>
</gene>
<protein>
    <recommendedName>
        <fullName>WD repeat-containing protein 55 homolog</fullName>
    </recommendedName>
</protein>
<evidence type="ECO:0000256" key="1">
    <source>
        <dbReference type="SAM" id="MobiDB-lite"/>
    </source>
</evidence>
<evidence type="ECO:0000305" key="2"/>
<dbReference type="EMBL" id="CM000070">
    <property type="protein sequence ID" value="EAL28825.2"/>
    <property type="molecule type" value="Genomic_DNA"/>
</dbReference>
<dbReference type="RefSeq" id="XP_001359675.2">
    <property type="nucleotide sequence ID" value="XM_001359638.4"/>
</dbReference>
<dbReference type="SMR" id="Q294Y7"/>
<dbReference type="FunCoup" id="Q294Y7">
    <property type="interactions" value="771"/>
</dbReference>
<dbReference type="STRING" id="46245.Q294Y7"/>
<dbReference type="EnsemblMetazoa" id="FBtr0282836">
    <property type="protein sequence ID" value="FBpp0281274"/>
    <property type="gene ID" value="FBgn0073241"/>
</dbReference>
<dbReference type="KEGG" id="dpo:4802839"/>
<dbReference type="eggNOG" id="KOG2444">
    <property type="taxonomic scope" value="Eukaryota"/>
</dbReference>
<dbReference type="HOGENOM" id="CLU_035848_1_0_1"/>
<dbReference type="InParanoid" id="Q294Y7"/>
<dbReference type="OMA" id="QAIHPTE"/>
<dbReference type="Proteomes" id="UP000001819">
    <property type="component" value="Chromosome 2"/>
</dbReference>
<dbReference type="Bgee" id="FBgn0073241">
    <property type="expression patterns" value="Expressed in female reproductive system and 2 other cell types or tissues"/>
</dbReference>
<dbReference type="FunFam" id="2.130.10.10:FF:001280">
    <property type="entry name" value="WD repeat-containing protein 55 homolog"/>
    <property type="match status" value="1"/>
</dbReference>
<dbReference type="Gene3D" id="2.130.10.10">
    <property type="entry name" value="YVTN repeat-like/Quinoprotein amine dehydrogenase"/>
    <property type="match status" value="2"/>
</dbReference>
<dbReference type="InterPro" id="IPR015943">
    <property type="entry name" value="WD40/YVTN_repeat-like_dom_sf"/>
</dbReference>
<dbReference type="InterPro" id="IPR019775">
    <property type="entry name" value="WD40_repeat_CS"/>
</dbReference>
<dbReference type="InterPro" id="IPR036322">
    <property type="entry name" value="WD40_repeat_dom_sf"/>
</dbReference>
<dbReference type="InterPro" id="IPR001680">
    <property type="entry name" value="WD40_rpt"/>
</dbReference>
<dbReference type="InterPro" id="IPR050505">
    <property type="entry name" value="WDR55_POC1"/>
</dbReference>
<dbReference type="PANTHER" id="PTHR44019">
    <property type="entry name" value="WD REPEAT-CONTAINING PROTEIN 55"/>
    <property type="match status" value="1"/>
</dbReference>
<dbReference type="PANTHER" id="PTHR44019:SF20">
    <property type="entry name" value="WD REPEAT-CONTAINING PROTEIN 55"/>
    <property type="match status" value="1"/>
</dbReference>
<dbReference type="Pfam" id="PF24796">
    <property type="entry name" value="WDR55"/>
    <property type="match status" value="1"/>
</dbReference>
<dbReference type="SMART" id="SM00320">
    <property type="entry name" value="WD40"/>
    <property type="match status" value="5"/>
</dbReference>
<dbReference type="SUPFAM" id="SSF50978">
    <property type="entry name" value="WD40 repeat-like"/>
    <property type="match status" value="1"/>
</dbReference>
<dbReference type="PROSITE" id="PS00678">
    <property type="entry name" value="WD_REPEATS_1"/>
    <property type="match status" value="1"/>
</dbReference>
<dbReference type="PROSITE" id="PS50082">
    <property type="entry name" value="WD_REPEATS_2"/>
    <property type="match status" value="3"/>
</dbReference>
<dbReference type="PROSITE" id="PS50294">
    <property type="entry name" value="WD_REPEATS_REGION"/>
    <property type="match status" value="1"/>
</dbReference>
<sequence length="503" mass="55818">MHTHNNFKTPSDADELDDLDDDMVIGVIEEIAQEALVGEDESDSDIDEHDLADMEAPEPNQNADENESISSDSSFDPNAEDSSDSDDSMLEEDEAEGASSGEATSAKRRKDDNDGPCGSAGDSAAFDLDDLDDETDETVRAIIAAIKKPRSAPPEIKLEDFITDVCFHPDRDIIALATIIGDVHLYEYGNEGNKLLRTIEVHSKACRDVEFTEDGRYLLTASKDKCVMVTDLETEKLKKLYETAHDDAINKLHVLDENLFATGDDAGTVKLWDLRTKNPIFELKEVEDQITQMITNDQKKLLLATSADGYLTTFNIAARKLYVQSEPYEEELNCMGIYRGSSKLVVGTSKGKLYSYNWGYFGYHCDMYPGIKSPVSLMIPITDRIACVAGEDGNIRACHITPYRNLGVVGQHNMPIESLDINTSGELLASSSHNNDVRFWNVKYFEDFGDIKYNDKHNAYKEKRHNLPSSKCTNASDFFSDLTKEDEDNADNNDAAAGPSNSA</sequence>
<name>WDR55_DROPS</name>